<comment type="function">
    <text>May serve as docking site to facilitate the association of other proteins to the plasma membrane.</text>
</comment>
<comment type="subcellular location">
    <subcellularLocation>
        <location evidence="3">Cell membrane</location>
        <topology evidence="3">Lipid-anchor</topology>
    </subcellularLocation>
</comment>
<comment type="tissue specificity">
    <text evidence="3">Ubiquitous.</text>
</comment>
<comment type="induction">
    <text evidence="3">Not induced by pathogens, cycloheximide and ozone treatment.</text>
</comment>
<comment type="miscellaneous">
    <text>Heat stable and remains soluble at temperatures exceeding 90 degrees Celsius.</text>
</comment>
<dbReference type="EMBL" id="AC009243">
    <property type="protein sequence ID" value="AAF17678.1"/>
    <property type="molecule type" value="Genomic_DNA"/>
</dbReference>
<dbReference type="EMBL" id="CP002684">
    <property type="protein sequence ID" value="AEE36037.1"/>
    <property type="molecule type" value="Genomic_DNA"/>
</dbReference>
<dbReference type="EMBL" id="AY087365">
    <property type="protein sequence ID" value="AAM64915.1"/>
    <property type="molecule type" value="mRNA"/>
</dbReference>
<dbReference type="PIR" id="E96808">
    <property type="entry name" value="E96808"/>
</dbReference>
<dbReference type="RefSeq" id="NP_177910.1">
    <property type="nucleotide sequence ID" value="NM_106436.5"/>
</dbReference>
<dbReference type="SMR" id="Q9SH14"/>
<dbReference type="BioGRID" id="29342">
    <property type="interactions" value="4"/>
</dbReference>
<dbReference type="STRING" id="3702.Q9SH14"/>
<dbReference type="PaxDb" id="3702-AT1G77870.1"/>
<dbReference type="ProteomicsDB" id="238455"/>
<dbReference type="EnsemblPlants" id="AT1G77870.1">
    <property type="protein sequence ID" value="AT1G77870.1"/>
    <property type="gene ID" value="AT1G77870"/>
</dbReference>
<dbReference type="GeneID" id="844123"/>
<dbReference type="Gramene" id="AT1G77870.1">
    <property type="protein sequence ID" value="AT1G77870.1"/>
    <property type="gene ID" value="AT1G77870"/>
</dbReference>
<dbReference type="KEGG" id="ath:AT1G77870"/>
<dbReference type="Araport" id="AT1G77870"/>
<dbReference type="TAIR" id="AT1G77870">
    <property type="gene designation" value="MUB5"/>
</dbReference>
<dbReference type="eggNOG" id="ENOG502S2V5">
    <property type="taxonomic scope" value="Eukaryota"/>
</dbReference>
<dbReference type="HOGENOM" id="CLU_136465_1_0_1"/>
<dbReference type="InParanoid" id="Q9SH14"/>
<dbReference type="OMA" id="HCVCCIL"/>
<dbReference type="PhylomeDB" id="Q9SH14"/>
<dbReference type="PRO" id="PR:Q9SH14"/>
<dbReference type="Proteomes" id="UP000006548">
    <property type="component" value="Chromosome 1"/>
</dbReference>
<dbReference type="ExpressionAtlas" id="Q9SH14">
    <property type="expression patterns" value="baseline and differential"/>
</dbReference>
<dbReference type="GO" id="GO:0005886">
    <property type="term" value="C:plasma membrane"/>
    <property type="evidence" value="ECO:0007669"/>
    <property type="project" value="UniProtKB-SubCell"/>
</dbReference>
<dbReference type="CDD" id="cd01814">
    <property type="entry name" value="Ubl_MUBs_plant"/>
    <property type="match status" value="1"/>
</dbReference>
<dbReference type="Gene3D" id="3.10.20.90">
    <property type="entry name" value="Phosphatidylinositol 3-kinase Catalytic Subunit, Chain A, domain 1"/>
    <property type="match status" value="1"/>
</dbReference>
<dbReference type="InterPro" id="IPR017000">
    <property type="entry name" value="MUB"/>
</dbReference>
<dbReference type="InterPro" id="IPR000626">
    <property type="entry name" value="Ubiquitin-like_dom"/>
</dbReference>
<dbReference type="InterPro" id="IPR029071">
    <property type="entry name" value="Ubiquitin-like_domsf"/>
</dbReference>
<dbReference type="InterPro" id="IPR040015">
    <property type="entry name" value="UBL3-like"/>
</dbReference>
<dbReference type="InterPro" id="IPR039540">
    <property type="entry name" value="UBL3-like_ubiquitin_dom"/>
</dbReference>
<dbReference type="PANTHER" id="PTHR13169:SF15">
    <property type="entry name" value="MEMBRANE-ANCHORED UBIQUITIN-FOLD PROTEIN 5"/>
    <property type="match status" value="1"/>
</dbReference>
<dbReference type="PANTHER" id="PTHR13169">
    <property type="entry name" value="UBIQUITIN-LIKE PROTEIN 3 HCG-1 PROTEIN"/>
    <property type="match status" value="1"/>
</dbReference>
<dbReference type="Pfam" id="PF13881">
    <property type="entry name" value="Rad60-SLD_2"/>
    <property type="match status" value="1"/>
</dbReference>
<dbReference type="PIRSF" id="PIRSF032572">
    <property type="entry name" value="MUB"/>
    <property type="match status" value="1"/>
</dbReference>
<dbReference type="SUPFAM" id="SSF54236">
    <property type="entry name" value="Ubiquitin-like"/>
    <property type="match status" value="1"/>
</dbReference>
<dbReference type="PROSITE" id="PS50053">
    <property type="entry name" value="UBIQUITIN_2"/>
    <property type="match status" value="1"/>
</dbReference>
<evidence type="ECO:0000255" key="1"/>
<evidence type="ECO:0000255" key="2">
    <source>
        <dbReference type="PROSITE-ProRule" id="PRU00214"/>
    </source>
</evidence>
<evidence type="ECO:0000269" key="3">
    <source>
    </source>
</evidence>
<evidence type="ECO:0000305" key="4"/>
<organism>
    <name type="scientific">Arabidopsis thaliana</name>
    <name type="common">Mouse-ear cress</name>
    <dbReference type="NCBI Taxonomy" id="3702"/>
    <lineage>
        <taxon>Eukaryota</taxon>
        <taxon>Viridiplantae</taxon>
        <taxon>Streptophyta</taxon>
        <taxon>Embryophyta</taxon>
        <taxon>Tracheophyta</taxon>
        <taxon>Spermatophyta</taxon>
        <taxon>Magnoliopsida</taxon>
        <taxon>eudicotyledons</taxon>
        <taxon>Gunneridae</taxon>
        <taxon>Pentapetalae</taxon>
        <taxon>rosids</taxon>
        <taxon>malvids</taxon>
        <taxon>Brassicales</taxon>
        <taxon>Brassicaceae</taxon>
        <taxon>Camelineae</taxon>
        <taxon>Arabidopsis</taxon>
    </lineage>
</organism>
<gene>
    <name type="primary">MUB5</name>
    <name type="ordered locus">At1g77870</name>
    <name type="ORF">F28K19.8</name>
</gene>
<reference key="1">
    <citation type="journal article" date="2000" name="Nature">
        <title>Sequence and analysis of chromosome 1 of the plant Arabidopsis thaliana.</title>
        <authorList>
            <person name="Theologis A."/>
            <person name="Ecker J.R."/>
            <person name="Palm C.J."/>
            <person name="Federspiel N.A."/>
            <person name="Kaul S."/>
            <person name="White O."/>
            <person name="Alonso J."/>
            <person name="Altafi H."/>
            <person name="Araujo R."/>
            <person name="Bowman C.L."/>
            <person name="Brooks S.Y."/>
            <person name="Buehler E."/>
            <person name="Chan A."/>
            <person name="Chao Q."/>
            <person name="Chen H."/>
            <person name="Cheuk R.F."/>
            <person name="Chin C.W."/>
            <person name="Chung M.K."/>
            <person name="Conn L."/>
            <person name="Conway A.B."/>
            <person name="Conway A.R."/>
            <person name="Creasy T.H."/>
            <person name="Dewar K."/>
            <person name="Dunn P."/>
            <person name="Etgu P."/>
            <person name="Feldblyum T.V."/>
            <person name="Feng J.-D."/>
            <person name="Fong B."/>
            <person name="Fujii C.Y."/>
            <person name="Gill J.E."/>
            <person name="Goldsmith A.D."/>
            <person name="Haas B."/>
            <person name="Hansen N.F."/>
            <person name="Hughes B."/>
            <person name="Huizar L."/>
            <person name="Hunter J.L."/>
            <person name="Jenkins J."/>
            <person name="Johnson-Hopson C."/>
            <person name="Khan S."/>
            <person name="Khaykin E."/>
            <person name="Kim C.J."/>
            <person name="Koo H.L."/>
            <person name="Kremenetskaia I."/>
            <person name="Kurtz D.B."/>
            <person name="Kwan A."/>
            <person name="Lam B."/>
            <person name="Langin-Hooper S."/>
            <person name="Lee A."/>
            <person name="Lee J.M."/>
            <person name="Lenz C.A."/>
            <person name="Li J.H."/>
            <person name="Li Y.-P."/>
            <person name="Lin X."/>
            <person name="Liu S.X."/>
            <person name="Liu Z.A."/>
            <person name="Luros J.S."/>
            <person name="Maiti R."/>
            <person name="Marziali A."/>
            <person name="Militscher J."/>
            <person name="Miranda M."/>
            <person name="Nguyen M."/>
            <person name="Nierman W.C."/>
            <person name="Osborne B.I."/>
            <person name="Pai G."/>
            <person name="Peterson J."/>
            <person name="Pham P.K."/>
            <person name="Rizzo M."/>
            <person name="Rooney T."/>
            <person name="Rowley D."/>
            <person name="Sakano H."/>
            <person name="Salzberg S.L."/>
            <person name="Schwartz J.R."/>
            <person name="Shinn P."/>
            <person name="Southwick A.M."/>
            <person name="Sun H."/>
            <person name="Tallon L.J."/>
            <person name="Tambunga G."/>
            <person name="Toriumi M.J."/>
            <person name="Town C.D."/>
            <person name="Utterback T."/>
            <person name="Van Aken S."/>
            <person name="Vaysberg M."/>
            <person name="Vysotskaia V.S."/>
            <person name="Walker M."/>
            <person name="Wu D."/>
            <person name="Yu G."/>
            <person name="Fraser C.M."/>
            <person name="Venter J.C."/>
            <person name="Davis R.W."/>
        </authorList>
    </citation>
    <scope>NUCLEOTIDE SEQUENCE [LARGE SCALE GENOMIC DNA]</scope>
    <source>
        <strain>cv. Columbia</strain>
    </source>
</reference>
<reference key="2">
    <citation type="journal article" date="2017" name="Plant J.">
        <title>Araport11: a complete reannotation of the Arabidopsis thaliana reference genome.</title>
        <authorList>
            <person name="Cheng C.Y."/>
            <person name="Krishnakumar V."/>
            <person name="Chan A.P."/>
            <person name="Thibaud-Nissen F."/>
            <person name="Schobel S."/>
            <person name="Town C.D."/>
        </authorList>
    </citation>
    <scope>GENOME REANNOTATION</scope>
    <source>
        <strain>cv. Columbia</strain>
    </source>
</reference>
<reference key="3">
    <citation type="submission" date="2002-03" db="EMBL/GenBank/DDBJ databases">
        <title>Full-length cDNA from Arabidopsis thaliana.</title>
        <authorList>
            <person name="Brover V.V."/>
            <person name="Troukhan M.E."/>
            <person name="Alexandrov N.A."/>
            <person name="Lu Y.-P."/>
            <person name="Flavell R.B."/>
            <person name="Feldmann K.A."/>
        </authorList>
    </citation>
    <scope>NUCLEOTIDE SEQUENCE [LARGE SCALE MRNA]</scope>
</reference>
<reference key="4">
    <citation type="journal article" date="2006" name="J. Biol. Chem.">
        <title>MUBS: a family of ubiquitin-fold proteins that are plasma membrane-anchored by prenylation.</title>
        <authorList>
            <person name="Downes B.P."/>
            <person name="Saracco S.A."/>
            <person name="Lee S.S."/>
            <person name="Crowell D.N."/>
            <person name="Vierstra R.D."/>
        </authorList>
    </citation>
    <scope>IDENTIFICATION</scope>
    <scope>NOMENCLATURE</scope>
    <scope>ISOPRENYLATION AT CYS-117</scope>
    <scope>METHYLATION AT CYS-117</scope>
    <scope>MUTAGENESIS OF CYS-117</scope>
    <scope>TISSUE SPECIFICITY</scope>
    <scope>INDUCTION</scope>
    <scope>SUBCELLULAR LOCATION</scope>
</reference>
<protein>
    <recommendedName>
        <fullName>Membrane-anchored ubiquitin-fold protein 5</fullName>
        <shortName>AtMUB5</shortName>
        <shortName>Membrane-anchored ub-fold protein 5</shortName>
    </recommendedName>
</protein>
<proteinExistence type="evidence at protein level"/>
<name>MUB5_ARATH</name>
<accession>Q9SH14</accession>
<accession>Q8LB82</accession>
<sequence length="120" mass="13487">MGDEDLIELKFRLADGTDIGPSKYSQFMTVASLKEKIIAQWPKDKENAPKMINEVKLINGGKILENNKTLSEARSLITIGELPGIVTTMHVVLRPPLFEKKKEKLQNDPPRKSHCVCCIL</sequence>
<keyword id="KW-1003">Cell membrane</keyword>
<keyword id="KW-0449">Lipoprotein</keyword>
<keyword id="KW-0472">Membrane</keyword>
<keyword id="KW-0488">Methylation</keyword>
<keyword id="KW-0564">Palmitate</keyword>
<keyword id="KW-0636">Prenylation</keyword>
<keyword id="KW-1185">Reference proteome</keyword>
<feature type="chain" id="PRO_0000248169" description="Membrane-anchored ubiquitin-fold protein 5">
    <location>
        <begin position="1"/>
        <end position="117"/>
    </location>
</feature>
<feature type="propeptide" id="PRO_0000248170" description="Removed in mature form">
    <location>
        <begin position="118"/>
        <end position="120"/>
    </location>
</feature>
<feature type="domain" description="Ubiquitin-like" evidence="2">
    <location>
        <begin position="7"/>
        <end position="72"/>
    </location>
</feature>
<feature type="modified residue" description="Cysteine methyl ester" evidence="3">
    <location>
        <position position="117"/>
    </location>
</feature>
<feature type="lipid moiety-binding region" description="S-palmitoyl cysteine" evidence="1">
    <location>
        <position position="115"/>
    </location>
</feature>
<feature type="lipid moiety-binding region" description="S-geranylgeranyl cysteine" evidence="3">
    <location>
        <position position="117"/>
    </location>
</feature>
<feature type="mutagenesis site" description="Loss of prenylation and membrane localization." evidence="3">
    <original>C</original>
    <variation>S</variation>
    <location>
        <position position="117"/>
    </location>
</feature>
<feature type="sequence conflict" description="In Ref. 3; AAM64915." evidence="4" ref="3">
    <original>T</original>
    <variation>P</variation>
    <location>
        <position position="78"/>
    </location>
</feature>